<evidence type="ECO:0000250" key="1"/>
<evidence type="ECO:0000255" key="2"/>
<evidence type="ECO:0000256" key="3">
    <source>
        <dbReference type="SAM" id="MobiDB-lite"/>
    </source>
</evidence>
<evidence type="ECO:0000305" key="4"/>
<keyword id="KW-1003">Cell membrane</keyword>
<keyword id="KW-0961">Cell wall biogenesis/degradation</keyword>
<keyword id="KW-0472">Membrane</keyword>
<keyword id="KW-0812">Transmembrane</keyword>
<keyword id="KW-1133">Transmembrane helix</keyword>
<feature type="chain" id="PRO_0000417812" description="Casparian strip membrane protein 1">
    <location>
        <begin position="1"/>
        <end position="202"/>
    </location>
</feature>
<feature type="topological domain" description="Cytoplasmic" evidence="2">
    <location>
        <begin position="1"/>
        <end position="42"/>
    </location>
</feature>
<feature type="transmembrane region" description="Helical" evidence="2">
    <location>
        <begin position="43"/>
        <end position="63"/>
    </location>
</feature>
<feature type="topological domain" description="Extracellular" evidence="2">
    <location>
        <begin position="64"/>
        <end position="90"/>
    </location>
</feature>
<feature type="transmembrane region" description="Helical" evidence="2">
    <location>
        <begin position="91"/>
        <end position="111"/>
    </location>
</feature>
<feature type="topological domain" description="Cytoplasmic" evidence="2">
    <location>
        <begin position="112"/>
        <end position="130"/>
    </location>
</feature>
<feature type="transmembrane region" description="Helical" evidence="2">
    <location>
        <begin position="131"/>
        <end position="151"/>
    </location>
</feature>
<feature type="topological domain" description="Extracellular" evidence="2">
    <location>
        <begin position="152"/>
        <end position="177"/>
    </location>
</feature>
<feature type="transmembrane region" description="Helical" evidence="2">
    <location>
        <begin position="178"/>
        <end position="198"/>
    </location>
</feature>
<feature type="topological domain" description="Cytoplasmic" evidence="2">
    <location>
        <begin position="199"/>
        <end position="202"/>
    </location>
</feature>
<feature type="region of interest" description="Disordered" evidence="3">
    <location>
        <begin position="1"/>
        <end position="30"/>
    </location>
</feature>
<feature type="compositionally biased region" description="Polar residues" evidence="3">
    <location>
        <begin position="1"/>
        <end position="13"/>
    </location>
</feature>
<protein>
    <recommendedName>
        <fullName>Casparian strip membrane protein 1</fullName>
        <shortName>TpCASP1</shortName>
    </recommendedName>
</protein>
<reference key="1">
    <citation type="submission" date="2007-11" db="EMBL/GenBank/DDBJ databases">
        <title>Early haustorium development in hemiparasitic Orobanchaceae.</title>
        <authorList>
            <person name="Tomilov A.A."/>
            <person name="Tomilova N.B."/>
            <person name="Matvienko M."/>
            <person name="Yoder J.I."/>
        </authorList>
    </citation>
    <scope>NUCLEOTIDE SEQUENCE [LARGE SCALE MRNA]</scope>
    <source>
        <strain>cv. TA-136</strain>
        <tissue>Root tip</tissue>
    </source>
</reference>
<reference key="2">
    <citation type="journal article" date="2014" name="Plant Physiol.">
        <title>Functional and evolutionary analysis of the CASPARIAN STRIP MEMBRANE DOMAIN PROTEIN family.</title>
        <authorList>
            <person name="Roppolo D."/>
            <person name="Boeckmann B."/>
            <person name="Pfister A."/>
            <person name="Boutet E."/>
            <person name="Rubio M.C."/>
            <person name="Denervaud-Tendon V."/>
            <person name="Vermeer J.E."/>
            <person name="Gheyselinck J."/>
            <person name="Xenarios I."/>
            <person name="Geldner N."/>
        </authorList>
    </citation>
    <scope>GENE FAMILY</scope>
    <scope>NOMENCLATURE</scope>
</reference>
<name>CASP1_TRIPD</name>
<dbReference type="EMBL" id="EY144887">
    <property type="status" value="NOT_ANNOTATED_CDS"/>
    <property type="molecule type" value="mRNA"/>
</dbReference>
<dbReference type="GO" id="GO:0005886">
    <property type="term" value="C:plasma membrane"/>
    <property type="evidence" value="ECO:0007669"/>
    <property type="project" value="UniProtKB-SubCell"/>
</dbReference>
<dbReference type="GO" id="GO:0071555">
    <property type="term" value="P:cell wall organization"/>
    <property type="evidence" value="ECO:0007669"/>
    <property type="project" value="UniProtKB-KW"/>
</dbReference>
<dbReference type="InterPro" id="IPR006459">
    <property type="entry name" value="CASP/CASPL"/>
</dbReference>
<dbReference type="InterPro" id="IPR006702">
    <property type="entry name" value="CASP_dom"/>
</dbReference>
<dbReference type="InterPro" id="IPR044173">
    <property type="entry name" value="CASPL"/>
</dbReference>
<dbReference type="NCBIfam" id="TIGR01569">
    <property type="entry name" value="A_tha_TIGR01569"/>
    <property type="match status" value="1"/>
</dbReference>
<dbReference type="PANTHER" id="PTHR36488:SF11">
    <property type="entry name" value="CASP-LIKE PROTEIN"/>
    <property type="match status" value="1"/>
</dbReference>
<dbReference type="PANTHER" id="PTHR36488">
    <property type="entry name" value="CASP-LIKE PROTEIN 1U1"/>
    <property type="match status" value="1"/>
</dbReference>
<dbReference type="Pfam" id="PF04535">
    <property type="entry name" value="CASP_dom"/>
    <property type="match status" value="1"/>
</dbReference>
<accession>P0DI31</accession>
<sequence>MEKSESSTIQIAESSKDRKGKAPLLPPPVHHERAAGYKRGVAIFDLILRISAATAALAATIVMGTTEQTLPFFTQFFQFRASYDDLPTFTFFVIAMAIVTGYLILSVPFSIVCIARPVVAAPRILLILCDTLTVTLATSAAGASAAIVYLAHNGXSDANWLAICQQFNDFCQRVSGAVVAAFVSAVLLIFLVVLSAIVLKKH</sequence>
<organism>
    <name type="scientific">Triphysaria pusilla</name>
    <name type="common">Dwarf owl's-clover</name>
    <name type="synonym">Orthocarpus pusillus</name>
    <dbReference type="NCBI Taxonomy" id="188295"/>
    <lineage>
        <taxon>Eukaryota</taxon>
        <taxon>Viridiplantae</taxon>
        <taxon>Streptophyta</taxon>
        <taxon>Embryophyta</taxon>
        <taxon>Tracheophyta</taxon>
        <taxon>Spermatophyta</taxon>
        <taxon>Magnoliopsida</taxon>
        <taxon>eudicotyledons</taxon>
        <taxon>Gunneridae</taxon>
        <taxon>Pentapetalae</taxon>
        <taxon>asterids</taxon>
        <taxon>lamiids</taxon>
        <taxon>Lamiales</taxon>
        <taxon>Orobanchaceae</taxon>
        <taxon>Pedicularideae</taxon>
        <taxon>Castillejinae</taxon>
        <taxon>Triphysaria</taxon>
    </lineage>
</organism>
<comment type="function">
    <text evidence="1">Regulates membrane-cell wall junctions and localized cell wall deposition. Required for establishment of the Casparian strip membrane domain (CSD) and the subsequent formation of Casparian strips, a cell wall modification of the root endodermis that determines an apoplastic barrier between the intraorganismal apoplasm and the extraorganismal apoplasm and prevents lateral diffusion (By similarity).</text>
</comment>
<comment type="subunit">
    <text evidence="1">Homodimer and heterodimers.</text>
</comment>
<comment type="subcellular location">
    <subcellularLocation>
        <location evidence="1">Cell membrane</location>
        <topology evidence="1">Multi-pass membrane protein</topology>
    </subcellularLocation>
    <text evidence="1">Very restricted localization following a belt shape within the plasma membrane which coincides with the position of the Casparian strip membrane domain in the root endodermis.</text>
</comment>
<comment type="similarity">
    <text evidence="4">Belongs to the Casparian strip membrane proteins (CASP) family.</text>
</comment>
<proteinExistence type="evidence at transcript level"/>